<feature type="chain" id="PRO_0000198763" description="Myosin regulatory light chain cdc4">
    <location>
        <begin position="1"/>
        <end position="141"/>
    </location>
</feature>
<feature type="domain" description="EF-hand 1" evidence="1">
    <location>
        <begin position="3"/>
        <end position="38"/>
    </location>
</feature>
<feature type="domain" description="EF-hand 2" evidence="1">
    <location>
        <begin position="74"/>
        <end position="109"/>
    </location>
</feature>
<feature type="domain" description="EF-hand 3" evidence="1">
    <location>
        <begin position="109"/>
        <end position="141"/>
    </location>
</feature>
<feature type="binding site" evidence="1">
    <location>
        <position position="87"/>
    </location>
    <ligand>
        <name>Ca(2+)</name>
        <dbReference type="ChEBI" id="CHEBI:29108"/>
    </ligand>
</feature>
<feature type="binding site" evidence="1">
    <location>
        <position position="89"/>
    </location>
    <ligand>
        <name>Ca(2+)</name>
        <dbReference type="ChEBI" id="CHEBI:29108"/>
    </ligand>
</feature>
<feature type="binding site" evidence="1">
    <location>
        <position position="91"/>
    </location>
    <ligand>
        <name>Ca(2+)</name>
        <dbReference type="ChEBI" id="CHEBI:29108"/>
    </ligand>
</feature>
<feature type="binding site" evidence="1">
    <location>
        <position position="93"/>
    </location>
    <ligand>
        <name>Ca(2+)</name>
        <dbReference type="ChEBI" id="CHEBI:29108"/>
    </ligand>
</feature>
<feature type="binding site" evidence="1">
    <location>
        <position position="98"/>
    </location>
    <ligand>
        <name>Ca(2+)</name>
        <dbReference type="ChEBI" id="CHEBI:29108"/>
    </ligand>
</feature>
<feature type="modified residue" description="Phosphoserine" evidence="2">
    <location>
        <position position="2"/>
    </location>
</feature>
<feature type="modified residue" description="Phosphoserine" evidence="2">
    <location>
        <position position="6"/>
    </location>
</feature>
<feature type="turn" evidence="4">
    <location>
        <begin position="6"/>
        <end position="8"/>
    </location>
</feature>
<feature type="helix" evidence="4">
    <location>
        <begin position="9"/>
        <end position="14"/>
    </location>
</feature>
<feature type="strand" evidence="4">
    <location>
        <begin position="17"/>
        <end position="23"/>
    </location>
</feature>
<feature type="helix" evidence="4">
    <location>
        <begin position="25"/>
        <end position="34"/>
    </location>
</feature>
<feature type="helix" evidence="4">
    <location>
        <begin position="41"/>
        <end position="48"/>
    </location>
</feature>
<feature type="strand" evidence="4">
    <location>
        <begin position="53"/>
        <end position="56"/>
    </location>
</feature>
<feature type="helix" evidence="4">
    <location>
        <begin position="57"/>
        <end position="64"/>
    </location>
</feature>
<feature type="strand" evidence="4">
    <location>
        <begin position="68"/>
        <end position="73"/>
    </location>
</feature>
<feature type="helix" evidence="4">
    <location>
        <begin position="76"/>
        <end position="84"/>
    </location>
</feature>
<feature type="helix" evidence="4">
    <location>
        <begin position="96"/>
        <end position="107"/>
    </location>
</feature>
<feature type="helix" evidence="4">
    <location>
        <begin position="112"/>
        <end position="121"/>
    </location>
</feature>
<feature type="turn" evidence="4">
    <location>
        <begin position="130"/>
        <end position="132"/>
    </location>
</feature>
<feature type="helix" evidence="4">
    <location>
        <begin position="133"/>
        <end position="139"/>
    </location>
</feature>
<gene>
    <name type="primary">cdc4</name>
    <name type="ORF">SPAP8A3.08</name>
</gene>
<reference key="1">
    <citation type="journal article" date="1995" name="J. Cell Biol.">
        <title>Schizosaccharomyces pombe cdc4+ gene encodes a novel EF-hand protein essential for cytokinesis.</title>
        <authorList>
            <person name="McCollum D."/>
            <person name="Balasubramanian M.K."/>
            <person name="Pelcher L.E."/>
            <person name="Hemmingsen S.M."/>
            <person name="Gould K.L."/>
        </authorList>
    </citation>
    <scope>NUCLEOTIDE SEQUENCE [GENOMIC DNA]</scope>
</reference>
<reference key="2">
    <citation type="journal article" date="2002" name="Nature">
        <title>The genome sequence of Schizosaccharomyces pombe.</title>
        <authorList>
            <person name="Wood V."/>
            <person name="Gwilliam R."/>
            <person name="Rajandream M.A."/>
            <person name="Lyne M.H."/>
            <person name="Lyne R."/>
            <person name="Stewart A."/>
            <person name="Sgouros J.G."/>
            <person name="Peat N."/>
            <person name="Hayles J."/>
            <person name="Baker S.G."/>
            <person name="Basham D."/>
            <person name="Bowman S."/>
            <person name="Brooks K."/>
            <person name="Brown D."/>
            <person name="Brown S."/>
            <person name="Chillingworth T."/>
            <person name="Churcher C.M."/>
            <person name="Collins M."/>
            <person name="Connor R."/>
            <person name="Cronin A."/>
            <person name="Davis P."/>
            <person name="Feltwell T."/>
            <person name="Fraser A."/>
            <person name="Gentles S."/>
            <person name="Goble A."/>
            <person name="Hamlin N."/>
            <person name="Harris D.E."/>
            <person name="Hidalgo J."/>
            <person name="Hodgson G."/>
            <person name="Holroyd S."/>
            <person name="Hornsby T."/>
            <person name="Howarth S."/>
            <person name="Huckle E.J."/>
            <person name="Hunt S."/>
            <person name="Jagels K."/>
            <person name="James K.D."/>
            <person name="Jones L."/>
            <person name="Jones M."/>
            <person name="Leather S."/>
            <person name="McDonald S."/>
            <person name="McLean J."/>
            <person name="Mooney P."/>
            <person name="Moule S."/>
            <person name="Mungall K.L."/>
            <person name="Murphy L.D."/>
            <person name="Niblett D."/>
            <person name="Odell C."/>
            <person name="Oliver K."/>
            <person name="O'Neil S."/>
            <person name="Pearson D."/>
            <person name="Quail M.A."/>
            <person name="Rabbinowitsch E."/>
            <person name="Rutherford K.M."/>
            <person name="Rutter S."/>
            <person name="Saunders D."/>
            <person name="Seeger K."/>
            <person name="Sharp S."/>
            <person name="Skelton J."/>
            <person name="Simmonds M.N."/>
            <person name="Squares R."/>
            <person name="Squares S."/>
            <person name="Stevens K."/>
            <person name="Taylor K."/>
            <person name="Taylor R.G."/>
            <person name="Tivey A."/>
            <person name="Walsh S.V."/>
            <person name="Warren T."/>
            <person name="Whitehead S."/>
            <person name="Woodward J.R."/>
            <person name="Volckaert G."/>
            <person name="Aert R."/>
            <person name="Robben J."/>
            <person name="Grymonprez B."/>
            <person name="Weltjens I."/>
            <person name="Vanstreels E."/>
            <person name="Rieger M."/>
            <person name="Schaefer M."/>
            <person name="Mueller-Auer S."/>
            <person name="Gabel C."/>
            <person name="Fuchs M."/>
            <person name="Duesterhoeft A."/>
            <person name="Fritzc C."/>
            <person name="Holzer E."/>
            <person name="Moestl D."/>
            <person name="Hilbert H."/>
            <person name="Borzym K."/>
            <person name="Langer I."/>
            <person name="Beck A."/>
            <person name="Lehrach H."/>
            <person name="Reinhardt R."/>
            <person name="Pohl T.M."/>
            <person name="Eger P."/>
            <person name="Zimmermann W."/>
            <person name="Wedler H."/>
            <person name="Wambutt R."/>
            <person name="Purnelle B."/>
            <person name="Goffeau A."/>
            <person name="Cadieu E."/>
            <person name="Dreano S."/>
            <person name="Gloux S."/>
            <person name="Lelaure V."/>
            <person name="Mottier S."/>
            <person name="Galibert F."/>
            <person name="Aves S.J."/>
            <person name="Xiang Z."/>
            <person name="Hunt C."/>
            <person name="Moore K."/>
            <person name="Hurst S.M."/>
            <person name="Lucas M."/>
            <person name="Rochet M."/>
            <person name="Gaillardin C."/>
            <person name="Tallada V.A."/>
            <person name="Garzon A."/>
            <person name="Thode G."/>
            <person name="Daga R.R."/>
            <person name="Cruzado L."/>
            <person name="Jimenez J."/>
            <person name="Sanchez M."/>
            <person name="del Rey F."/>
            <person name="Benito J."/>
            <person name="Dominguez A."/>
            <person name="Revuelta J.L."/>
            <person name="Moreno S."/>
            <person name="Armstrong J."/>
            <person name="Forsburg S.L."/>
            <person name="Cerutti L."/>
            <person name="Lowe T."/>
            <person name="McCombie W.R."/>
            <person name="Paulsen I."/>
            <person name="Potashkin J."/>
            <person name="Shpakovski G.V."/>
            <person name="Ussery D."/>
            <person name="Barrell B.G."/>
            <person name="Nurse P."/>
        </authorList>
    </citation>
    <scope>NUCLEOTIDE SEQUENCE [LARGE SCALE GENOMIC DNA]</scope>
    <source>
        <strain>972 / ATCC 24843</strain>
    </source>
</reference>
<reference key="3">
    <citation type="journal article" date="1999" name="J. Biol. Chem.">
        <title>Phosphorylation of the myosin-II light chain does not regulate the timing of cytokinesis in fission yeast.</title>
        <authorList>
            <person name="McCollum D."/>
            <person name="Feoktistova A."/>
            <person name="Gould K.L."/>
        </authorList>
    </citation>
    <scope>PHOSPHORYLATION AT SER-2 AND SER-6</scope>
</reference>
<reference key="4">
    <citation type="journal article" date="2001" name="J. Biol. Chem.">
        <title>Cdc4p, a contractile ring protein essential for cytokinesis in Schizosaccharomyces pombe, interacts with a phosphatidylinositol 4-kinase.</title>
        <authorList>
            <person name="Desautels M."/>
            <person name="Den Haese J.P."/>
            <person name="Slupsky C.M."/>
            <person name="McIntosh L.P."/>
            <person name="Hemmingsen S.M."/>
        </authorList>
    </citation>
    <scope>INTERACTION</scope>
</reference>
<reference key="5">
    <citation type="journal article" date="2001" name="J. Biol. Chem.">
        <title>Structure of Cdc4p, a contractile ring protein essential for cytokinesis in Schizosaccharomyces pombe.</title>
        <authorList>
            <person name="Slupsky C.M."/>
            <person name="Desautels M."/>
            <person name="Huebert T."/>
            <person name="Zhao R."/>
            <person name="Hemmingsen S.M."/>
            <person name="McIntosh L.P."/>
        </authorList>
    </citation>
    <scope>STRUCTURE BY NMR</scope>
</reference>
<dbReference type="EMBL" id="L42454">
    <property type="protein sequence ID" value="AAA67467.1"/>
    <property type="molecule type" value="Genomic_DNA"/>
</dbReference>
<dbReference type="EMBL" id="CU329670">
    <property type="protein sequence ID" value="CAB55175.1"/>
    <property type="molecule type" value="Genomic_DNA"/>
</dbReference>
<dbReference type="PIR" id="T39245">
    <property type="entry name" value="T39245"/>
</dbReference>
<dbReference type="RefSeq" id="NP_594947.1">
    <property type="nucleotide sequence ID" value="NM_001020378.2"/>
</dbReference>
<dbReference type="PDB" id="1GGW">
    <property type="method" value="NMR"/>
    <property type="chains" value="A=2-141"/>
</dbReference>
<dbReference type="PDBsum" id="1GGW"/>
<dbReference type="BMRB" id="Q09196"/>
<dbReference type="SMR" id="Q09196"/>
<dbReference type="BioGRID" id="278195">
    <property type="interactions" value="40"/>
</dbReference>
<dbReference type="FunCoup" id="Q09196">
    <property type="interactions" value="17"/>
</dbReference>
<dbReference type="STRING" id="284812.Q09196"/>
<dbReference type="iPTMnet" id="Q09196"/>
<dbReference type="PaxDb" id="4896-SPAP8A3.08.1"/>
<dbReference type="EnsemblFungi" id="SPAP8A3.08.1">
    <property type="protein sequence ID" value="SPAP8A3.08.1:pep"/>
    <property type="gene ID" value="SPAP8A3.08"/>
</dbReference>
<dbReference type="GeneID" id="2541699"/>
<dbReference type="KEGG" id="spo:2541699"/>
<dbReference type="PomBase" id="SPAP8A3.08">
    <property type="gene designation" value="cdc4"/>
</dbReference>
<dbReference type="VEuPathDB" id="FungiDB:SPAP8A3.08"/>
<dbReference type="eggNOG" id="KOG0027">
    <property type="taxonomic scope" value="Eukaryota"/>
</dbReference>
<dbReference type="HOGENOM" id="CLU_061288_13_1_1"/>
<dbReference type="InParanoid" id="Q09196"/>
<dbReference type="OMA" id="HDQASTN"/>
<dbReference type="PhylomeDB" id="Q09196"/>
<dbReference type="Reactome" id="R-SPO-5627123">
    <property type="pathway name" value="RHO GTPases activate PAKs"/>
</dbReference>
<dbReference type="EvolutionaryTrace" id="Q09196"/>
<dbReference type="PRO" id="PR:Q09196"/>
<dbReference type="Proteomes" id="UP000002485">
    <property type="component" value="Chromosome I"/>
</dbReference>
<dbReference type="GO" id="GO:0032153">
    <property type="term" value="C:cell division site"/>
    <property type="evidence" value="ECO:0007005"/>
    <property type="project" value="PomBase"/>
</dbReference>
<dbReference type="GO" id="GO:0005737">
    <property type="term" value="C:cytoplasm"/>
    <property type="evidence" value="ECO:0000314"/>
    <property type="project" value="PomBase"/>
</dbReference>
<dbReference type="GO" id="GO:0005829">
    <property type="term" value="C:cytosol"/>
    <property type="evidence" value="ECO:0007005"/>
    <property type="project" value="PomBase"/>
</dbReference>
<dbReference type="GO" id="GO:0071341">
    <property type="term" value="C:medial cortical node"/>
    <property type="evidence" value="ECO:0000314"/>
    <property type="project" value="PomBase"/>
</dbReference>
<dbReference type="GO" id="GO:0110085">
    <property type="term" value="C:mitotic actomyosin contractile ring"/>
    <property type="evidence" value="ECO:0000314"/>
    <property type="project" value="PomBase"/>
</dbReference>
<dbReference type="GO" id="GO:0016460">
    <property type="term" value="C:myosin II complex"/>
    <property type="evidence" value="ECO:0000314"/>
    <property type="project" value="PomBase"/>
</dbReference>
<dbReference type="GO" id="GO:0005634">
    <property type="term" value="C:nucleus"/>
    <property type="evidence" value="ECO:0007005"/>
    <property type="project" value="PomBase"/>
</dbReference>
<dbReference type="GO" id="GO:0046872">
    <property type="term" value="F:metal ion binding"/>
    <property type="evidence" value="ECO:0007669"/>
    <property type="project" value="UniProtKB-KW"/>
</dbReference>
<dbReference type="GO" id="GO:0000917">
    <property type="term" value="P:division septum assembly"/>
    <property type="evidence" value="ECO:0007669"/>
    <property type="project" value="UniProtKB-KW"/>
</dbReference>
<dbReference type="GO" id="GO:1903475">
    <property type="term" value="P:mitotic actomyosin contractile ring assembly"/>
    <property type="evidence" value="ECO:0000315"/>
    <property type="project" value="PomBase"/>
</dbReference>
<dbReference type="CDD" id="cd00051">
    <property type="entry name" value="EFh"/>
    <property type="match status" value="1"/>
</dbReference>
<dbReference type="FunFam" id="1.10.238.10:FF:000356">
    <property type="entry name" value="Myosin II light chain"/>
    <property type="match status" value="1"/>
</dbReference>
<dbReference type="FunFam" id="1.10.238.10:FF:000082">
    <property type="entry name" value="Myosin light chain 1"/>
    <property type="match status" value="1"/>
</dbReference>
<dbReference type="Gene3D" id="1.10.238.10">
    <property type="entry name" value="EF-hand"/>
    <property type="match status" value="2"/>
</dbReference>
<dbReference type="InterPro" id="IPR050230">
    <property type="entry name" value="CALM/Myosin/TropC-like"/>
</dbReference>
<dbReference type="InterPro" id="IPR011992">
    <property type="entry name" value="EF-hand-dom_pair"/>
</dbReference>
<dbReference type="InterPro" id="IPR018247">
    <property type="entry name" value="EF_Hand_1_Ca_BS"/>
</dbReference>
<dbReference type="InterPro" id="IPR002048">
    <property type="entry name" value="EF_hand_dom"/>
</dbReference>
<dbReference type="PANTHER" id="PTHR23048:SF0">
    <property type="entry name" value="CALMODULIN LIKE 3"/>
    <property type="match status" value="1"/>
</dbReference>
<dbReference type="PANTHER" id="PTHR23048">
    <property type="entry name" value="MYOSIN LIGHT CHAIN 1, 3"/>
    <property type="match status" value="1"/>
</dbReference>
<dbReference type="Pfam" id="PF13499">
    <property type="entry name" value="EF-hand_7"/>
    <property type="match status" value="1"/>
</dbReference>
<dbReference type="SUPFAM" id="SSF47473">
    <property type="entry name" value="EF-hand"/>
    <property type="match status" value="1"/>
</dbReference>
<dbReference type="PROSITE" id="PS00018">
    <property type="entry name" value="EF_HAND_1"/>
    <property type="match status" value="1"/>
</dbReference>
<dbReference type="PROSITE" id="PS50222">
    <property type="entry name" value="EF_HAND_2"/>
    <property type="match status" value="3"/>
</dbReference>
<name>MLR4_SCHPO</name>
<protein>
    <recommendedName>
        <fullName>Myosin regulatory light chain cdc4</fullName>
    </recommendedName>
</protein>
<sequence>MSTDDSPYKQAFSLFDRHGTGRIPKTSIGDLLRACGQNPTLAEITEIESTLPAEVDMEQFLQVLNRPNGFDMPGDPEEFVKGFQVFDKDATGMIGVGELRYVLTSLGEKLSNEEMDELLKGVPVKDGMVNYHDFVQMILAN</sequence>
<accession>Q09196</accession>
<evidence type="ECO:0000255" key="1">
    <source>
        <dbReference type="PROSITE-ProRule" id="PRU00448"/>
    </source>
</evidence>
<evidence type="ECO:0000269" key="2">
    <source>
    </source>
</evidence>
<evidence type="ECO:0000269" key="3">
    <source>
    </source>
</evidence>
<evidence type="ECO:0007829" key="4">
    <source>
        <dbReference type="PDB" id="1GGW"/>
    </source>
</evidence>
<organism>
    <name type="scientific">Schizosaccharomyces pombe (strain 972 / ATCC 24843)</name>
    <name type="common">Fission yeast</name>
    <dbReference type="NCBI Taxonomy" id="284812"/>
    <lineage>
        <taxon>Eukaryota</taxon>
        <taxon>Fungi</taxon>
        <taxon>Dikarya</taxon>
        <taxon>Ascomycota</taxon>
        <taxon>Taphrinomycotina</taxon>
        <taxon>Schizosaccharomycetes</taxon>
        <taxon>Schizosaccharomycetales</taxon>
        <taxon>Schizosaccharomycetaceae</taxon>
        <taxon>Schizosaccharomyces</taxon>
    </lineage>
</organism>
<keyword id="KW-0002">3D-structure</keyword>
<keyword id="KW-0106">Calcium</keyword>
<keyword id="KW-0131">Cell cycle</keyword>
<keyword id="KW-0132">Cell division</keyword>
<keyword id="KW-0963">Cytoplasm</keyword>
<keyword id="KW-0479">Metal-binding</keyword>
<keyword id="KW-0505">Motor protein</keyword>
<keyword id="KW-0518">Myosin</keyword>
<keyword id="KW-0597">Phosphoprotein</keyword>
<keyword id="KW-1185">Reference proteome</keyword>
<keyword id="KW-0677">Repeat</keyword>
<keyword id="KW-0717">Septation</keyword>
<comment type="function">
    <text>Involved in cytokinesis. Required for the formation and function of the contractile ring.</text>
</comment>
<comment type="subunit">
    <text evidence="3">Binds to myosin II chains myo2 and myo3. Interacts with vps27 and a PI 4-kinase pik1.</text>
</comment>
<comment type="subcellular location">
    <subcellularLocation>
        <location>Cytoplasm</location>
    </subcellularLocation>
</comment>
<comment type="PTM">
    <text evidence="2">Phosphorylated on either Ser-2 or Ser-6 but not both. Phosphorylation is not essential for the function of the protein.</text>
</comment>
<comment type="miscellaneous">
    <text>In vitro, this chain does not seem to bind calcium.</text>
</comment>
<proteinExistence type="evidence at protein level"/>